<evidence type="ECO:0000255" key="1">
    <source>
        <dbReference type="HAMAP-Rule" id="MF_00270"/>
    </source>
</evidence>
<evidence type="ECO:0000305" key="2"/>
<gene>
    <name evidence="1" type="primary">rpsR</name>
    <name type="ordered locus">SO_3928</name>
</gene>
<comment type="function">
    <text evidence="1">Binds as a heterodimer with protein bS6 to the central domain of the 16S rRNA, where it helps stabilize the platform of the 30S subunit.</text>
</comment>
<comment type="subunit">
    <text evidence="1">Part of the 30S ribosomal subunit. Forms a tight heterodimer with protein bS6.</text>
</comment>
<comment type="similarity">
    <text evidence="1">Belongs to the bacterial ribosomal protein bS18 family.</text>
</comment>
<protein>
    <recommendedName>
        <fullName evidence="1">Small ribosomal subunit protein bS18</fullName>
    </recommendedName>
    <alternativeName>
        <fullName evidence="2">30S ribosomal protein S18</fullName>
    </alternativeName>
</protein>
<reference key="1">
    <citation type="journal article" date="2002" name="Nat. Biotechnol.">
        <title>Genome sequence of the dissimilatory metal ion-reducing bacterium Shewanella oneidensis.</title>
        <authorList>
            <person name="Heidelberg J.F."/>
            <person name="Paulsen I.T."/>
            <person name="Nelson K.E."/>
            <person name="Gaidos E.J."/>
            <person name="Nelson W.C."/>
            <person name="Read T.D."/>
            <person name="Eisen J.A."/>
            <person name="Seshadri R."/>
            <person name="Ward N.L."/>
            <person name="Methe B.A."/>
            <person name="Clayton R.A."/>
            <person name="Meyer T."/>
            <person name="Tsapin A."/>
            <person name="Scott J."/>
            <person name="Beanan M.J."/>
            <person name="Brinkac L.M."/>
            <person name="Daugherty S.C."/>
            <person name="DeBoy R.T."/>
            <person name="Dodson R.J."/>
            <person name="Durkin A.S."/>
            <person name="Haft D.H."/>
            <person name="Kolonay J.F."/>
            <person name="Madupu R."/>
            <person name="Peterson J.D."/>
            <person name="Umayam L.A."/>
            <person name="White O."/>
            <person name="Wolf A.M."/>
            <person name="Vamathevan J.J."/>
            <person name="Weidman J.F."/>
            <person name="Impraim M."/>
            <person name="Lee K."/>
            <person name="Berry K.J."/>
            <person name="Lee C."/>
            <person name="Mueller J."/>
            <person name="Khouri H.M."/>
            <person name="Gill J."/>
            <person name="Utterback T.R."/>
            <person name="McDonald L.A."/>
            <person name="Feldblyum T.V."/>
            <person name="Smith H.O."/>
            <person name="Venter J.C."/>
            <person name="Nealson K.H."/>
            <person name="Fraser C.M."/>
        </authorList>
    </citation>
    <scope>NUCLEOTIDE SEQUENCE [LARGE SCALE GENOMIC DNA]</scope>
    <source>
        <strain>ATCC 700550 / JCM 31522 / CIP 106686 / LMG 19005 / NCIMB 14063 / MR-1</strain>
    </source>
</reference>
<accession>Q8EAH4</accession>
<proteinExistence type="inferred from homology"/>
<feature type="chain" id="PRO_0000111222" description="Small ribosomal subunit protein bS18">
    <location>
        <begin position="1"/>
        <end position="75"/>
    </location>
</feature>
<sequence>MARYFRRRKFCRFTAEGVAEIDYKDIVTLKNYITESGKIVPSRITGTSAKYQRQLARAIKRARYLSLLPYTDLHQ</sequence>
<keyword id="KW-1185">Reference proteome</keyword>
<keyword id="KW-0687">Ribonucleoprotein</keyword>
<keyword id="KW-0689">Ribosomal protein</keyword>
<keyword id="KW-0694">RNA-binding</keyword>
<keyword id="KW-0699">rRNA-binding</keyword>
<dbReference type="EMBL" id="AE014299">
    <property type="protein sequence ID" value="AAN56903.1"/>
    <property type="molecule type" value="Genomic_DNA"/>
</dbReference>
<dbReference type="RefSeq" id="NP_719459.1">
    <property type="nucleotide sequence ID" value="NC_004347.2"/>
</dbReference>
<dbReference type="RefSeq" id="WP_006083042.1">
    <property type="nucleotide sequence ID" value="NZ_CP053946.1"/>
</dbReference>
<dbReference type="SMR" id="Q8EAH4"/>
<dbReference type="STRING" id="211586.SO_3928"/>
<dbReference type="PaxDb" id="211586-SO_3928"/>
<dbReference type="GeneID" id="94726693"/>
<dbReference type="KEGG" id="son:SO_3928"/>
<dbReference type="PATRIC" id="fig|211586.12.peg.3812"/>
<dbReference type="eggNOG" id="COG0238">
    <property type="taxonomic scope" value="Bacteria"/>
</dbReference>
<dbReference type="HOGENOM" id="CLU_148710_2_3_6"/>
<dbReference type="OrthoDB" id="9812008at2"/>
<dbReference type="PhylomeDB" id="Q8EAH4"/>
<dbReference type="BioCyc" id="SONE211586:G1GMP-3646-MONOMER"/>
<dbReference type="PRO" id="PR:Q8EAH4"/>
<dbReference type="Proteomes" id="UP000008186">
    <property type="component" value="Chromosome"/>
</dbReference>
<dbReference type="GO" id="GO:0022627">
    <property type="term" value="C:cytosolic small ribosomal subunit"/>
    <property type="evidence" value="ECO:0000318"/>
    <property type="project" value="GO_Central"/>
</dbReference>
<dbReference type="GO" id="GO:0070181">
    <property type="term" value="F:small ribosomal subunit rRNA binding"/>
    <property type="evidence" value="ECO:0000318"/>
    <property type="project" value="GO_Central"/>
</dbReference>
<dbReference type="GO" id="GO:0003735">
    <property type="term" value="F:structural constituent of ribosome"/>
    <property type="evidence" value="ECO:0000318"/>
    <property type="project" value="GO_Central"/>
</dbReference>
<dbReference type="GO" id="GO:0006412">
    <property type="term" value="P:translation"/>
    <property type="evidence" value="ECO:0000318"/>
    <property type="project" value="GO_Central"/>
</dbReference>
<dbReference type="FunFam" id="4.10.640.10:FF:000001">
    <property type="entry name" value="30S ribosomal protein S18"/>
    <property type="match status" value="1"/>
</dbReference>
<dbReference type="Gene3D" id="4.10.640.10">
    <property type="entry name" value="Ribosomal protein S18"/>
    <property type="match status" value="1"/>
</dbReference>
<dbReference type="HAMAP" id="MF_00270">
    <property type="entry name" value="Ribosomal_bS18"/>
    <property type="match status" value="1"/>
</dbReference>
<dbReference type="InterPro" id="IPR001648">
    <property type="entry name" value="Ribosomal_bS18"/>
</dbReference>
<dbReference type="InterPro" id="IPR018275">
    <property type="entry name" value="Ribosomal_bS18_CS"/>
</dbReference>
<dbReference type="InterPro" id="IPR036870">
    <property type="entry name" value="Ribosomal_bS18_sf"/>
</dbReference>
<dbReference type="NCBIfam" id="TIGR00165">
    <property type="entry name" value="S18"/>
    <property type="match status" value="1"/>
</dbReference>
<dbReference type="PANTHER" id="PTHR13479">
    <property type="entry name" value="30S RIBOSOMAL PROTEIN S18"/>
    <property type="match status" value="1"/>
</dbReference>
<dbReference type="PANTHER" id="PTHR13479:SF40">
    <property type="entry name" value="SMALL RIBOSOMAL SUBUNIT PROTEIN BS18M"/>
    <property type="match status" value="1"/>
</dbReference>
<dbReference type="Pfam" id="PF01084">
    <property type="entry name" value="Ribosomal_S18"/>
    <property type="match status" value="1"/>
</dbReference>
<dbReference type="PRINTS" id="PR00974">
    <property type="entry name" value="RIBOSOMALS18"/>
</dbReference>
<dbReference type="SUPFAM" id="SSF46911">
    <property type="entry name" value="Ribosomal protein S18"/>
    <property type="match status" value="1"/>
</dbReference>
<dbReference type="PROSITE" id="PS00057">
    <property type="entry name" value="RIBOSOMAL_S18"/>
    <property type="match status" value="1"/>
</dbReference>
<name>RS18_SHEON</name>
<organism>
    <name type="scientific">Shewanella oneidensis (strain ATCC 700550 / JCM 31522 / CIP 106686 / LMG 19005 / NCIMB 14063 / MR-1)</name>
    <dbReference type="NCBI Taxonomy" id="211586"/>
    <lineage>
        <taxon>Bacteria</taxon>
        <taxon>Pseudomonadati</taxon>
        <taxon>Pseudomonadota</taxon>
        <taxon>Gammaproteobacteria</taxon>
        <taxon>Alteromonadales</taxon>
        <taxon>Shewanellaceae</taxon>
        <taxon>Shewanella</taxon>
    </lineage>
</organism>